<feature type="chain" id="PRO_0000174159" description="Probable dolichyl pyrophosphate Man9GlcNAc2 alpha-1,3-glucosyltransferase">
    <location>
        <begin position="1"/>
        <end position="533"/>
    </location>
</feature>
<feature type="transmembrane region" description="Helical" evidence="2">
    <location>
        <begin position="42"/>
        <end position="64"/>
    </location>
</feature>
<feature type="transmembrane region" description="Helical" evidence="2">
    <location>
        <begin position="149"/>
        <end position="169"/>
    </location>
</feature>
<feature type="transmembrane region" description="Helical" evidence="2">
    <location>
        <begin position="184"/>
        <end position="204"/>
    </location>
</feature>
<feature type="transmembrane region" description="Helical" evidence="2">
    <location>
        <begin position="214"/>
        <end position="234"/>
    </location>
</feature>
<feature type="transmembrane region" description="Helical" evidence="2">
    <location>
        <begin position="264"/>
        <end position="284"/>
    </location>
</feature>
<feature type="transmembrane region" description="Helical" evidence="2">
    <location>
        <begin position="360"/>
        <end position="380"/>
    </location>
</feature>
<feature type="transmembrane region" description="Helical" evidence="2">
    <location>
        <begin position="422"/>
        <end position="442"/>
    </location>
</feature>
<feature type="transmembrane region" description="Helical" evidence="2">
    <location>
        <begin position="463"/>
        <end position="483"/>
    </location>
</feature>
<feature type="transmembrane region" description="Helical" evidence="2">
    <location>
        <begin position="491"/>
        <end position="511"/>
    </location>
</feature>
<feature type="region of interest" description="Disordered" evidence="3">
    <location>
        <begin position="1"/>
        <end position="20"/>
    </location>
</feature>
<reference key="1">
    <citation type="journal article" date="1997" name="DNA Res.">
        <title>Structural analysis of Arabidopsis thaliana chromosome 5. I. Sequence features of the 1.6 Mb regions covered by twenty physically assigned P1 clones.</title>
        <authorList>
            <person name="Sato S."/>
            <person name="Kotani H."/>
            <person name="Nakamura Y."/>
            <person name="Kaneko T."/>
            <person name="Asamizu E."/>
            <person name="Fukami M."/>
            <person name="Miyajima N."/>
            <person name="Tabata S."/>
        </authorList>
    </citation>
    <scope>NUCLEOTIDE SEQUENCE [LARGE SCALE GENOMIC DNA]</scope>
    <source>
        <strain>cv. Columbia</strain>
    </source>
</reference>
<reference key="2">
    <citation type="journal article" date="2017" name="Plant J.">
        <title>Araport11: a complete reannotation of the Arabidopsis thaliana reference genome.</title>
        <authorList>
            <person name="Cheng C.Y."/>
            <person name="Krishnakumar V."/>
            <person name="Chan A.P."/>
            <person name="Thibaud-Nissen F."/>
            <person name="Schobel S."/>
            <person name="Town C.D."/>
        </authorList>
    </citation>
    <scope>GENOME REANNOTATION</scope>
    <source>
        <strain>cv. Columbia</strain>
    </source>
</reference>
<reference key="3">
    <citation type="journal article" date="2003" name="Science">
        <title>Empirical analysis of transcriptional activity in the Arabidopsis genome.</title>
        <authorList>
            <person name="Yamada K."/>
            <person name="Lim J."/>
            <person name="Dale J.M."/>
            <person name="Chen H."/>
            <person name="Shinn P."/>
            <person name="Palm C.J."/>
            <person name="Southwick A.M."/>
            <person name="Wu H.C."/>
            <person name="Kim C.J."/>
            <person name="Nguyen M."/>
            <person name="Pham P.K."/>
            <person name="Cheuk R.F."/>
            <person name="Karlin-Newmann G."/>
            <person name="Liu S.X."/>
            <person name="Lam B."/>
            <person name="Sakano H."/>
            <person name="Wu T."/>
            <person name="Yu G."/>
            <person name="Miranda M."/>
            <person name="Quach H.L."/>
            <person name="Tripp M."/>
            <person name="Chang C.H."/>
            <person name="Lee J.M."/>
            <person name="Toriumi M.J."/>
            <person name="Chan M.M."/>
            <person name="Tang C.C."/>
            <person name="Onodera C.S."/>
            <person name="Deng J.M."/>
            <person name="Akiyama K."/>
            <person name="Ansari Y."/>
            <person name="Arakawa T."/>
            <person name="Banh J."/>
            <person name="Banno F."/>
            <person name="Bowser L."/>
            <person name="Brooks S.Y."/>
            <person name="Carninci P."/>
            <person name="Chao Q."/>
            <person name="Choy N."/>
            <person name="Enju A."/>
            <person name="Goldsmith A.D."/>
            <person name="Gurjal M."/>
            <person name="Hansen N.F."/>
            <person name="Hayashizaki Y."/>
            <person name="Johnson-Hopson C."/>
            <person name="Hsuan V.W."/>
            <person name="Iida K."/>
            <person name="Karnes M."/>
            <person name="Khan S."/>
            <person name="Koesema E."/>
            <person name="Ishida J."/>
            <person name="Jiang P.X."/>
            <person name="Jones T."/>
            <person name="Kawai J."/>
            <person name="Kamiya A."/>
            <person name="Meyers C."/>
            <person name="Nakajima M."/>
            <person name="Narusaka M."/>
            <person name="Seki M."/>
            <person name="Sakurai T."/>
            <person name="Satou M."/>
            <person name="Tamse R."/>
            <person name="Vaysberg M."/>
            <person name="Wallender E.K."/>
            <person name="Wong C."/>
            <person name="Yamamura Y."/>
            <person name="Yuan S."/>
            <person name="Shinozaki K."/>
            <person name="Davis R.W."/>
            <person name="Theologis A."/>
            <person name="Ecker J.R."/>
        </authorList>
    </citation>
    <scope>NUCLEOTIDE SEQUENCE [LARGE SCALE MRNA]</scope>
    <source>
        <strain>cv. Columbia</strain>
    </source>
</reference>
<sequence length="533" mass="61113">MPKKKPAKHSGEDDITIPVSPQTGSSIDTWWWLTHKGTTTSFLCISLFALLIRSAVTMYPYSGAGIPPKFGDFEAQRHWMEITTNLPVIDWYRNGTYNDLTYWGLDYPPLTAYQSYIHGIFLRFFNPESVALLSSRGHESYLGKLLMRWTVLSSDAFIFFPAALFFVLVYHRNRTRGGKSEVAWHIAMILLNPCLILIDHGHFQYNCISLGLTVGAIAAVLCESEVLTCVLFSLALSHKQMSAYFAPAFFSHLLGKCLRRKSPILSVIKLGIAVIVTFVIFWWPYVHSLDDFLMVLSRLAPFERGIYEDYVANFWCTTSILIKWKNLFTTQSLKSISLAATILASLPSMVQQILSPSNEGFLYGLLNSSMAFYLFSFQVHEKSILMPFLSATLLALKLPDHFSHLTYYALFSMFPLLCRDKLLIPYLTLSFLFTVIYHSPGNHHAIQKTDVSFFSFKNFPGYVFLLRTHFFISVVLHVLYLTIKPPQKYPFLFEALIMILCFSYFIMFAFYTNYTQWTLSSHFGSSDKEKKQI</sequence>
<name>ALG6_ARATH</name>
<organism>
    <name type="scientific">Arabidopsis thaliana</name>
    <name type="common">Mouse-ear cress</name>
    <dbReference type="NCBI Taxonomy" id="3702"/>
    <lineage>
        <taxon>Eukaryota</taxon>
        <taxon>Viridiplantae</taxon>
        <taxon>Streptophyta</taxon>
        <taxon>Embryophyta</taxon>
        <taxon>Tracheophyta</taxon>
        <taxon>Spermatophyta</taxon>
        <taxon>Magnoliopsida</taxon>
        <taxon>eudicotyledons</taxon>
        <taxon>Gunneridae</taxon>
        <taxon>Pentapetalae</taxon>
        <taxon>rosids</taxon>
        <taxon>malvids</taxon>
        <taxon>Brassicales</taxon>
        <taxon>Brassicaceae</taxon>
        <taxon>Camelineae</taxon>
        <taxon>Arabidopsis</taxon>
    </lineage>
</organism>
<comment type="function">
    <text evidence="1">Adds the first glucose residue to the lipid-linked oligosaccharide precursor for N-linked glycosylation. Transfers glucose from dolichyl phosphate glucose (Dol-P-Glc) onto the lipid-linked oligosaccharide Man(9)GlcNAc(2)-PP-Dol (By similarity).</text>
</comment>
<comment type="catalytic activity">
    <reaction>
        <text>an alpha-D-Man-(1-&gt;2)-alpha-D-Man-(1-&gt;2)-alpha-D-Man-(1-&gt;3)-[alpha-D-Man-(1-&gt;2)-alpha-D-Man-(1-&gt;3)-[alpha-D-Man-(1-&gt;2)-alpha-D-Man-(1-&gt;6)]-alpha-D-Man-(1-&gt;6)]-beta-D-Man-(1-&gt;4)-beta-D-GlcNAc-(1-&gt;4)-alpha-D-GlcNAc-diphospho-di-trans,poly-cis-dolichol + a di-trans,poly-cis-dolichyl beta-D-glucosyl phosphate = an alpha-D-Glc-(1-&gt;3)-alpha-D-Man-(1-&gt;2)-alpha-D-Man-(1-&gt;2)-alpha-D-Man-(1-&gt;3)-[alpha-D-Man-(1-&gt;2)-alpha-D-Man-(1-&gt;3)-[alpha-D-Man-(1-&gt;2)-alpha-D-Man-(1-&gt;6)]-alpha-D-Man-(1-&gt;6)]-beta-D-Man-(1-&gt;4)-beta-D-GlcNAc-(1-&gt;4)-alpha-D-GlcNAc-diphospho-di-trans,poly-cis-dolichol + a di-trans,poly-cis-dolichyl phosphate + H(+)</text>
        <dbReference type="Rhea" id="RHEA:30635"/>
        <dbReference type="Rhea" id="RHEA-COMP:19498"/>
        <dbReference type="Rhea" id="RHEA-COMP:19502"/>
        <dbReference type="Rhea" id="RHEA-COMP:19520"/>
        <dbReference type="Rhea" id="RHEA-COMP:19521"/>
        <dbReference type="ChEBI" id="CHEBI:15378"/>
        <dbReference type="ChEBI" id="CHEBI:57525"/>
        <dbReference type="ChEBI" id="CHEBI:57683"/>
        <dbReference type="ChEBI" id="CHEBI:132520"/>
        <dbReference type="ChEBI" id="CHEBI:132521"/>
        <dbReference type="EC" id="2.4.1.267"/>
    </reaction>
</comment>
<comment type="pathway">
    <text>Protein modification; protein glycosylation.</text>
</comment>
<comment type="subcellular location">
    <subcellularLocation>
        <location evidence="4">Endoplasmic reticulum membrane</location>
        <topology evidence="4">Multi-pass membrane protein</topology>
    </subcellularLocation>
</comment>
<comment type="similarity">
    <text evidence="4">Belongs to the ALG6/ALG8 glucosyltransferase family.</text>
</comment>
<keyword id="KW-0256">Endoplasmic reticulum</keyword>
<keyword id="KW-0328">Glycosyltransferase</keyword>
<keyword id="KW-0472">Membrane</keyword>
<keyword id="KW-1185">Reference proteome</keyword>
<keyword id="KW-0808">Transferase</keyword>
<keyword id="KW-0812">Transmembrane</keyword>
<keyword id="KW-1133">Transmembrane helix</keyword>
<dbReference type="EC" id="2.4.1.267"/>
<dbReference type="EMBL" id="AB005248">
    <property type="protein sequence ID" value="BAB09358.1"/>
    <property type="molecule type" value="Genomic_DNA"/>
</dbReference>
<dbReference type="EMBL" id="CP002688">
    <property type="protein sequence ID" value="AED94319.1"/>
    <property type="molecule type" value="Genomic_DNA"/>
</dbReference>
<dbReference type="EMBL" id="CP002688">
    <property type="protein sequence ID" value="AED94320.1"/>
    <property type="molecule type" value="Genomic_DNA"/>
</dbReference>
<dbReference type="EMBL" id="AY035066">
    <property type="protein sequence ID" value="AAK59571.1"/>
    <property type="molecule type" value="mRNA"/>
</dbReference>
<dbReference type="EMBL" id="AY056364">
    <property type="protein sequence ID" value="AAL07250.1"/>
    <property type="molecule type" value="mRNA"/>
</dbReference>
<dbReference type="RefSeq" id="NP_001190434.1">
    <property type="nucleotide sequence ID" value="NM_001203505.1"/>
</dbReference>
<dbReference type="RefSeq" id="NP_198662.1">
    <property type="nucleotide sequence ID" value="NM_123207.2"/>
</dbReference>
<dbReference type="SMR" id="Q9FF17"/>
<dbReference type="FunCoup" id="Q9FF17">
    <property type="interactions" value="4477"/>
</dbReference>
<dbReference type="STRING" id="3702.Q9FF17"/>
<dbReference type="CAZy" id="GT57">
    <property type="family name" value="Glycosyltransferase Family 57"/>
</dbReference>
<dbReference type="PaxDb" id="3702-AT5G38460.2"/>
<dbReference type="ProteomicsDB" id="244967"/>
<dbReference type="EnsemblPlants" id="AT5G38460.1">
    <property type="protein sequence ID" value="AT5G38460.1"/>
    <property type="gene ID" value="AT5G38460"/>
</dbReference>
<dbReference type="EnsemblPlants" id="AT5G38460.2">
    <property type="protein sequence ID" value="AT5G38460.2"/>
    <property type="gene ID" value="AT5G38460"/>
</dbReference>
<dbReference type="GeneID" id="833834"/>
<dbReference type="Gramene" id="AT5G38460.1">
    <property type="protein sequence ID" value="AT5G38460.1"/>
    <property type="gene ID" value="AT5G38460"/>
</dbReference>
<dbReference type="Gramene" id="AT5G38460.2">
    <property type="protein sequence ID" value="AT5G38460.2"/>
    <property type="gene ID" value="AT5G38460"/>
</dbReference>
<dbReference type="KEGG" id="ath:AT5G38460"/>
<dbReference type="Araport" id="AT5G38460"/>
<dbReference type="TAIR" id="AT5G38460"/>
<dbReference type="eggNOG" id="KOG2575">
    <property type="taxonomic scope" value="Eukaryota"/>
</dbReference>
<dbReference type="HOGENOM" id="CLU_008110_3_0_1"/>
<dbReference type="InParanoid" id="Q9FF17"/>
<dbReference type="OMA" id="FQVPPMH"/>
<dbReference type="PhylomeDB" id="Q9FF17"/>
<dbReference type="BioCyc" id="ARA:AT5G38460-MONOMER"/>
<dbReference type="UniPathway" id="UPA00378"/>
<dbReference type="PRO" id="PR:Q9FF17"/>
<dbReference type="Proteomes" id="UP000006548">
    <property type="component" value="Chromosome 5"/>
</dbReference>
<dbReference type="ExpressionAtlas" id="Q9FF17">
    <property type="expression patterns" value="baseline and differential"/>
</dbReference>
<dbReference type="GO" id="GO:0005789">
    <property type="term" value="C:endoplasmic reticulum membrane"/>
    <property type="evidence" value="ECO:0007669"/>
    <property type="project" value="UniProtKB-SubCell"/>
</dbReference>
<dbReference type="GO" id="GO:0042281">
    <property type="term" value="F:dolichyl pyrophosphate Man9GlcNAc2 alpha-1,3-glucosyltransferase activity"/>
    <property type="evidence" value="ECO:0007669"/>
    <property type="project" value="UniProtKB-EC"/>
</dbReference>
<dbReference type="InterPro" id="IPR004856">
    <property type="entry name" value="Glyco_trans_ALG6/ALG8"/>
</dbReference>
<dbReference type="PANTHER" id="PTHR12413">
    <property type="entry name" value="DOLICHYL GLYCOSYLTRANSFERASE"/>
    <property type="match status" value="1"/>
</dbReference>
<dbReference type="PANTHER" id="PTHR12413:SF1">
    <property type="entry name" value="DOLICHYL PYROPHOSPHATE MAN9GLCNAC2 ALPHA-1,3-GLUCOSYLTRANSFERASE"/>
    <property type="match status" value="1"/>
</dbReference>
<dbReference type="Pfam" id="PF03155">
    <property type="entry name" value="Alg6_Alg8"/>
    <property type="match status" value="1"/>
</dbReference>
<evidence type="ECO:0000250" key="1"/>
<evidence type="ECO:0000255" key="2"/>
<evidence type="ECO:0000256" key="3">
    <source>
        <dbReference type="SAM" id="MobiDB-lite"/>
    </source>
</evidence>
<evidence type="ECO:0000305" key="4"/>
<protein>
    <recommendedName>
        <fullName>Probable dolichyl pyrophosphate Man9GlcNAc2 alpha-1,3-glucosyltransferase</fullName>
        <ecNumber>2.4.1.267</ecNumber>
    </recommendedName>
    <alternativeName>
        <fullName>Asparagine-linked glycosylation protein 6 homolog</fullName>
    </alternativeName>
    <alternativeName>
        <fullName>Dol-P-Glc:Man(9)GlcNAc(2)-PP-Dol alpha-1,3-glucosyltransferase</fullName>
    </alternativeName>
    <alternativeName>
        <fullName>Dolichyl-P-Glc:Man9GlcNAc2-PP-dolichyl glucosyltransferase</fullName>
    </alternativeName>
</protein>
<accession>Q9FF17</accession>
<proteinExistence type="evidence at transcript level"/>
<gene>
    <name type="ordered locus">At5g38460</name>
    <name type="ORF">MXI10.19</name>
</gene>